<proteinExistence type="inferred from homology"/>
<accession>Q9XD17</accession>
<reference key="1">
    <citation type="journal article" date="2000" name="FEMS Microbiol. Lett.">
        <title>Characterization of the Leptospira interrogans S10-spc-alpha operon.</title>
        <authorList>
            <person name="Zuerner R.L."/>
            <person name="Hartskeerl R.A."/>
            <person name="van de Kemp H."/>
            <person name="Bal A.E."/>
        </authorList>
    </citation>
    <scope>NUCLEOTIDE SEQUENCE [GENOMIC DNA]</scope>
    <source>
        <strain>Lai / Serogroup Icterohaemorrhagiae / Serovar lai</strain>
    </source>
</reference>
<reference key="2">
    <citation type="journal article" date="2003" name="Nature">
        <title>Unique physiological and pathogenic features of Leptospira interrogans revealed by whole-genome sequencing.</title>
        <authorList>
            <person name="Ren S.-X."/>
            <person name="Fu G."/>
            <person name="Jiang X.-G."/>
            <person name="Zeng R."/>
            <person name="Miao Y.-G."/>
            <person name="Xu H."/>
            <person name="Zhang Y.-X."/>
            <person name="Xiong H."/>
            <person name="Lu G."/>
            <person name="Lu L.-F."/>
            <person name="Jiang H.-Q."/>
            <person name="Jia J."/>
            <person name="Tu Y.-F."/>
            <person name="Jiang J.-X."/>
            <person name="Gu W.-Y."/>
            <person name="Zhang Y.-Q."/>
            <person name="Cai Z."/>
            <person name="Sheng H.-H."/>
            <person name="Yin H.-F."/>
            <person name="Zhang Y."/>
            <person name="Zhu G.-F."/>
            <person name="Wan M."/>
            <person name="Huang H.-L."/>
            <person name="Qian Z."/>
            <person name="Wang S.-Y."/>
            <person name="Ma W."/>
            <person name="Yao Z.-J."/>
            <person name="Shen Y."/>
            <person name="Qiang B.-Q."/>
            <person name="Xia Q.-C."/>
            <person name="Guo X.-K."/>
            <person name="Danchin A."/>
            <person name="Saint Girons I."/>
            <person name="Somerville R.L."/>
            <person name="Wen Y.-M."/>
            <person name="Shi M.-H."/>
            <person name="Chen Z."/>
            <person name="Xu J.-G."/>
            <person name="Zhao G.-P."/>
        </authorList>
    </citation>
    <scope>NUCLEOTIDE SEQUENCE [LARGE SCALE GENOMIC DNA]</scope>
    <source>
        <strain>56601</strain>
    </source>
</reference>
<sequence>MKKERLEQASAFGKDRVKKKKNTDTSSNLIPVPKGATKEKKRVGRGPGSKVGKTAGRGSKGQYARNTVRRGFEGGQMPIHRRLPKRGFTSKFHKEFYPVNLRDIEKSGLTGNIDAKIMVQSKILDKETTLFKILGTGEIKKAIHVIADGFSQSAKEKIEKAGGSIKLRAELKLATSETKK</sequence>
<protein>
    <recommendedName>
        <fullName evidence="1">Large ribosomal subunit protein uL15</fullName>
    </recommendedName>
    <alternativeName>
        <fullName evidence="3">50S ribosomal protein L15</fullName>
    </alternativeName>
</protein>
<gene>
    <name evidence="1" type="primary">rplO</name>
    <name type="ordered locus">LA_0758</name>
</gene>
<dbReference type="EMBL" id="AF115283">
    <property type="protein sequence ID" value="AAD40602.1"/>
    <property type="molecule type" value="Genomic_DNA"/>
</dbReference>
<dbReference type="EMBL" id="AE010300">
    <property type="protein sequence ID" value="AAN47957.1"/>
    <property type="molecule type" value="Genomic_DNA"/>
</dbReference>
<dbReference type="RefSeq" id="NP_710939.1">
    <property type="nucleotide sequence ID" value="NC_004342.2"/>
</dbReference>
<dbReference type="RefSeq" id="WP_000712192.1">
    <property type="nucleotide sequence ID" value="NC_004342.2"/>
</dbReference>
<dbReference type="SMR" id="Q9XD17"/>
<dbReference type="FunCoup" id="Q9XD17">
    <property type="interactions" value="553"/>
</dbReference>
<dbReference type="STRING" id="189518.LA_0758"/>
<dbReference type="PaxDb" id="189518-LA_0758"/>
<dbReference type="EnsemblBacteria" id="AAN47957">
    <property type="protein sequence ID" value="AAN47957"/>
    <property type="gene ID" value="LA_0758"/>
</dbReference>
<dbReference type="GeneID" id="61142728"/>
<dbReference type="KEGG" id="lil:LA_0758"/>
<dbReference type="PATRIC" id="fig|189518.3.peg.764"/>
<dbReference type="HOGENOM" id="CLU_055188_4_0_12"/>
<dbReference type="InParanoid" id="Q9XD17"/>
<dbReference type="OrthoDB" id="9810293at2"/>
<dbReference type="Proteomes" id="UP000001408">
    <property type="component" value="Chromosome I"/>
</dbReference>
<dbReference type="GO" id="GO:0022625">
    <property type="term" value="C:cytosolic large ribosomal subunit"/>
    <property type="evidence" value="ECO:0000318"/>
    <property type="project" value="GO_Central"/>
</dbReference>
<dbReference type="GO" id="GO:0019843">
    <property type="term" value="F:rRNA binding"/>
    <property type="evidence" value="ECO:0007669"/>
    <property type="project" value="UniProtKB-UniRule"/>
</dbReference>
<dbReference type="GO" id="GO:0003735">
    <property type="term" value="F:structural constituent of ribosome"/>
    <property type="evidence" value="ECO:0000318"/>
    <property type="project" value="GO_Central"/>
</dbReference>
<dbReference type="GO" id="GO:0006412">
    <property type="term" value="P:translation"/>
    <property type="evidence" value="ECO:0007669"/>
    <property type="project" value="UniProtKB-UniRule"/>
</dbReference>
<dbReference type="Gene3D" id="3.100.10.10">
    <property type="match status" value="1"/>
</dbReference>
<dbReference type="HAMAP" id="MF_01341">
    <property type="entry name" value="Ribosomal_uL15"/>
    <property type="match status" value="1"/>
</dbReference>
<dbReference type="InterPro" id="IPR030878">
    <property type="entry name" value="Ribosomal_uL15"/>
</dbReference>
<dbReference type="InterPro" id="IPR021131">
    <property type="entry name" value="Ribosomal_uL15/eL18"/>
</dbReference>
<dbReference type="InterPro" id="IPR036227">
    <property type="entry name" value="Ribosomal_uL15/eL18_sf"/>
</dbReference>
<dbReference type="InterPro" id="IPR005749">
    <property type="entry name" value="Ribosomal_uL15_bac-type"/>
</dbReference>
<dbReference type="InterPro" id="IPR001196">
    <property type="entry name" value="Ribosomal_uL15_CS"/>
</dbReference>
<dbReference type="NCBIfam" id="TIGR01071">
    <property type="entry name" value="rplO_bact"/>
    <property type="match status" value="1"/>
</dbReference>
<dbReference type="PANTHER" id="PTHR12934">
    <property type="entry name" value="50S RIBOSOMAL PROTEIN L15"/>
    <property type="match status" value="1"/>
</dbReference>
<dbReference type="PANTHER" id="PTHR12934:SF11">
    <property type="entry name" value="LARGE RIBOSOMAL SUBUNIT PROTEIN UL15M"/>
    <property type="match status" value="1"/>
</dbReference>
<dbReference type="Pfam" id="PF00828">
    <property type="entry name" value="Ribosomal_L27A"/>
    <property type="match status" value="1"/>
</dbReference>
<dbReference type="SUPFAM" id="SSF52080">
    <property type="entry name" value="Ribosomal proteins L15p and L18e"/>
    <property type="match status" value="1"/>
</dbReference>
<dbReference type="PROSITE" id="PS00475">
    <property type="entry name" value="RIBOSOMAL_L15"/>
    <property type="match status" value="1"/>
</dbReference>
<feature type="chain" id="PRO_0000104743" description="Large ribosomal subunit protein uL15">
    <location>
        <begin position="1"/>
        <end position="180"/>
    </location>
</feature>
<feature type="region of interest" description="Disordered" evidence="2">
    <location>
        <begin position="1"/>
        <end position="62"/>
    </location>
</feature>
<evidence type="ECO:0000255" key="1">
    <source>
        <dbReference type="HAMAP-Rule" id="MF_01341"/>
    </source>
</evidence>
<evidence type="ECO:0000256" key="2">
    <source>
        <dbReference type="SAM" id="MobiDB-lite"/>
    </source>
</evidence>
<evidence type="ECO:0000305" key="3"/>
<comment type="function">
    <text evidence="1">Binds to the 23S rRNA.</text>
</comment>
<comment type="subunit">
    <text evidence="1">Part of the 50S ribosomal subunit.</text>
</comment>
<comment type="similarity">
    <text evidence="1">Belongs to the universal ribosomal protein uL15 family.</text>
</comment>
<name>RL15_LEPIN</name>
<keyword id="KW-1185">Reference proteome</keyword>
<keyword id="KW-0687">Ribonucleoprotein</keyword>
<keyword id="KW-0689">Ribosomal protein</keyword>
<keyword id="KW-0694">RNA-binding</keyword>
<keyword id="KW-0699">rRNA-binding</keyword>
<organism>
    <name type="scientific">Leptospira interrogans serogroup Icterohaemorrhagiae serovar Lai (strain 56601)</name>
    <dbReference type="NCBI Taxonomy" id="189518"/>
    <lineage>
        <taxon>Bacteria</taxon>
        <taxon>Pseudomonadati</taxon>
        <taxon>Spirochaetota</taxon>
        <taxon>Spirochaetia</taxon>
        <taxon>Leptospirales</taxon>
        <taxon>Leptospiraceae</taxon>
        <taxon>Leptospira</taxon>
    </lineage>
</organism>